<comment type="similarity">
    <text evidence="1">Belongs to the eukaryotic ribosomal protein eS6 family.</text>
</comment>
<gene>
    <name evidence="1" type="primary">rps6e</name>
    <name type="ordered locus">Mpal_0338</name>
</gene>
<keyword id="KW-1185">Reference proteome</keyword>
<keyword id="KW-0687">Ribonucleoprotein</keyword>
<keyword id="KW-0689">Ribosomal protein</keyword>
<name>RS6E_METPE</name>
<evidence type="ECO:0000255" key="1">
    <source>
        <dbReference type="HAMAP-Rule" id="MF_00512"/>
    </source>
</evidence>
<evidence type="ECO:0000305" key="2"/>
<feature type="chain" id="PRO_1000146104" description="Small ribosomal subunit protein eS6">
    <location>
        <begin position="1"/>
        <end position="132"/>
    </location>
</feature>
<sequence length="132" mass="13741">MVEFKIILSDTRTGHSYKMDVSGGAAGALIGKRVGTEIDAAPLGLNGYKILITGASDRNGTPSRRDLPGSGRRGLLLAGGVGFNPKEDGQRARKSIRGNEITADFVQINAKVATYGEKSLDELLAAPAAAAE</sequence>
<dbReference type="EMBL" id="CP001338">
    <property type="protein sequence ID" value="ACL15720.1"/>
    <property type="molecule type" value="Genomic_DNA"/>
</dbReference>
<dbReference type="RefSeq" id="WP_012617039.1">
    <property type="nucleotide sequence ID" value="NC_011832.1"/>
</dbReference>
<dbReference type="SMR" id="B8GJR6"/>
<dbReference type="STRING" id="521011.Mpal_0338"/>
<dbReference type="GeneID" id="7272642"/>
<dbReference type="KEGG" id="mpl:Mpal_0338"/>
<dbReference type="eggNOG" id="arCOG01946">
    <property type="taxonomic scope" value="Archaea"/>
</dbReference>
<dbReference type="HOGENOM" id="CLU_109671_1_1_2"/>
<dbReference type="OrthoDB" id="7793at2157"/>
<dbReference type="Proteomes" id="UP000002457">
    <property type="component" value="Chromosome"/>
</dbReference>
<dbReference type="GO" id="GO:1990904">
    <property type="term" value="C:ribonucleoprotein complex"/>
    <property type="evidence" value="ECO:0007669"/>
    <property type="project" value="UniProtKB-KW"/>
</dbReference>
<dbReference type="GO" id="GO:0005840">
    <property type="term" value="C:ribosome"/>
    <property type="evidence" value="ECO:0007669"/>
    <property type="project" value="UniProtKB-KW"/>
</dbReference>
<dbReference type="GO" id="GO:0003735">
    <property type="term" value="F:structural constituent of ribosome"/>
    <property type="evidence" value="ECO:0007669"/>
    <property type="project" value="InterPro"/>
</dbReference>
<dbReference type="GO" id="GO:0006412">
    <property type="term" value="P:translation"/>
    <property type="evidence" value="ECO:0007669"/>
    <property type="project" value="UniProtKB-UniRule"/>
</dbReference>
<dbReference type="HAMAP" id="MF_00512">
    <property type="entry name" value="Ribosomal_eS6"/>
    <property type="match status" value="1"/>
</dbReference>
<dbReference type="InterPro" id="IPR001377">
    <property type="entry name" value="Ribosomal_eS6"/>
</dbReference>
<dbReference type="InterPro" id="IPR020924">
    <property type="entry name" value="Ribosomal_eS6_arc"/>
</dbReference>
<dbReference type="NCBIfam" id="NF003294">
    <property type="entry name" value="PRK04290.1-3"/>
    <property type="match status" value="1"/>
</dbReference>
<dbReference type="PANTHER" id="PTHR11502">
    <property type="entry name" value="40S RIBOSOMAL PROTEIN S6"/>
    <property type="match status" value="1"/>
</dbReference>
<dbReference type="Pfam" id="PF01092">
    <property type="entry name" value="Ribosomal_S6e"/>
    <property type="match status" value="1"/>
</dbReference>
<dbReference type="SMART" id="SM01405">
    <property type="entry name" value="Ribosomal_S6e"/>
    <property type="match status" value="1"/>
</dbReference>
<proteinExistence type="inferred from homology"/>
<accession>B8GJR6</accession>
<organism>
    <name type="scientific">Methanosphaerula palustris (strain ATCC BAA-1556 / DSM 19958 / E1-9c)</name>
    <dbReference type="NCBI Taxonomy" id="521011"/>
    <lineage>
        <taxon>Archaea</taxon>
        <taxon>Methanobacteriati</taxon>
        <taxon>Methanobacteriota</taxon>
        <taxon>Stenosarchaea group</taxon>
        <taxon>Methanomicrobia</taxon>
        <taxon>Methanomicrobiales</taxon>
        <taxon>Methanoregulaceae</taxon>
        <taxon>Methanosphaerula</taxon>
    </lineage>
</organism>
<reference key="1">
    <citation type="journal article" date="2015" name="Genome Announc.">
        <title>Complete Genome Sequence of Methanosphaerula palustris E1-9CT, a Hydrogenotrophic Methanogen Isolated from a Minerotrophic Fen Peatland.</title>
        <authorList>
            <person name="Cadillo-Quiroz H."/>
            <person name="Browne P."/>
            <person name="Kyrpides N."/>
            <person name="Woyke T."/>
            <person name="Goodwin L."/>
            <person name="Detter C."/>
            <person name="Yavitt J.B."/>
            <person name="Zinder S.H."/>
        </authorList>
    </citation>
    <scope>NUCLEOTIDE SEQUENCE [LARGE SCALE GENOMIC DNA]</scope>
    <source>
        <strain>ATCC BAA-1556 / DSM 19958 / E1-9c</strain>
    </source>
</reference>
<protein>
    <recommendedName>
        <fullName evidence="1">Small ribosomal subunit protein eS6</fullName>
    </recommendedName>
    <alternativeName>
        <fullName evidence="2">30S ribosomal protein S6e</fullName>
    </alternativeName>
</protein>